<sequence>MKRPKLKKGSKRLSCHKRYKIQKKVREHNRKARKEAKKSGTRKQKKEISVPNNAPFKAEILQEAQRRRQQEEELKQNRKLERQKEVAKRRKLDEKKKKNSEKREKRDNKKNKGTKAAESAEVVSCRHVNKVLEQSDVVLEVLDARDPLGSRCAQAEEAVLKSPNKRLLLLLNKADLVPRDVLEKWLQVLTAELPTVPFRCLPQAPSKSPGKKHKVPNTADLCTENRCPGGQVLLRILHSLCPSQSDAIKVGVIGFANVGKSSVINSLKQSHVCNVGPTKGTTRVLQEVRLDPQIRMLDSPALVVSPQNAPLAVMLRSVSDCNVDVLAAVSAILKHCSKQELMLHYTLPDYRNSLECVTLLAQRRGLLKKGGVPDTEAAGRLLFNDWMGVRMKYYCQPPDSPGVQPHITKEVTAAMSSGICSEQLAQDNASTLKALKCPSPANLVVFTSVGPTGAIMDERQLVEPEPIEEELEANDGEEDVEEEHEGSEEEEDEEVEQEVVSAKEQEVVSAKEQEVVSAKEQDSKSAGPSVSFDQAQEDDAYDFNTDFV</sequence>
<feature type="chain" id="PRO_0000122449" description="Guanine nucleotide-binding protein-like 3">
    <location>
        <begin position="1"/>
        <end position="548"/>
    </location>
</feature>
<feature type="domain" description="CP-type G" evidence="4">
    <location>
        <begin position="125"/>
        <end position="305"/>
    </location>
</feature>
<feature type="region of interest" description="Disordered" evidence="5">
    <location>
        <begin position="1"/>
        <end position="118"/>
    </location>
</feature>
<feature type="region of interest" description="Disordered" evidence="5">
    <location>
        <begin position="459"/>
        <end position="548"/>
    </location>
</feature>
<feature type="coiled-coil region" evidence="3">
    <location>
        <begin position="58"/>
        <end position="114"/>
    </location>
</feature>
<feature type="compositionally biased region" description="Basic residues" evidence="5">
    <location>
        <begin position="1"/>
        <end position="45"/>
    </location>
</feature>
<feature type="compositionally biased region" description="Basic and acidic residues" evidence="5">
    <location>
        <begin position="64"/>
        <end position="107"/>
    </location>
</feature>
<feature type="compositionally biased region" description="Acidic residues" evidence="5">
    <location>
        <begin position="465"/>
        <end position="497"/>
    </location>
</feature>
<feature type="compositionally biased region" description="Basic and acidic residues" evidence="5">
    <location>
        <begin position="501"/>
        <end position="523"/>
    </location>
</feature>
<feature type="compositionally biased region" description="Polar residues" evidence="5">
    <location>
        <begin position="524"/>
        <end position="534"/>
    </location>
</feature>
<feature type="binding site" evidence="3">
    <location>
        <begin position="172"/>
        <end position="175"/>
    </location>
    <ligand>
        <name>GTP</name>
        <dbReference type="ChEBI" id="CHEBI:37565"/>
    </ligand>
</feature>
<feature type="binding site" evidence="3">
    <location>
        <begin position="256"/>
        <end position="263"/>
    </location>
    <ligand>
        <name>GTP</name>
        <dbReference type="ChEBI" id="CHEBI:37565"/>
    </ligand>
</feature>
<feature type="binding site" evidence="3">
    <location>
        <begin position="298"/>
        <end position="301"/>
    </location>
    <ligand>
        <name>GTP</name>
        <dbReference type="ChEBI" id="CHEBI:37565"/>
    </ligand>
</feature>
<name>GNL3_XENTR</name>
<accession>Q6P4W5</accession>
<dbReference type="EMBL" id="BC063220">
    <property type="protein sequence ID" value="AAH63220.1"/>
    <property type="status" value="ALT_INIT"/>
    <property type="molecule type" value="mRNA"/>
</dbReference>
<dbReference type="RefSeq" id="NP_001263611.1">
    <property type="nucleotide sequence ID" value="NM_001276682.1"/>
</dbReference>
<dbReference type="SMR" id="Q6P4W5"/>
<dbReference type="FunCoup" id="Q6P4W5">
    <property type="interactions" value="1788"/>
</dbReference>
<dbReference type="GeneID" id="394765"/>
<dbReference type="KEGG" id="xtr:394765"/>
<dbReference type="AGR" id="Xenbase:XB-GENE-6456133"/>
<dbReference type="CTD" id="26354"/>
<dbReference type="Xenbase" id="XB-GENE-6456133">
    <property type="gene designation" value="gnl3"/>
</dbReference>
<dbReference type="InParanoid" id="Q6P4W5"/>
<dbReference type="OMA" id="FKLDGLW"/>
<dbReference type="OrthoDB" id="444945at2759"/>
<dbReference type="Reactome" id="R-XTR-6791226">
    <property type="pathway name" value="Major pathway of rRNA processing in the nucleolus and cytosol"/>
</dbReference>
<dbReference type="Proteomes" id="UP000008143">
    <property type="component" value="Chromosome 4"/>
</dbReference>
<dbReference type="Bgee" id="ENSXETG00000013669">
    <property type="expression patterns" value="Expressed in 4-cell stage embryo and 14 other cell types or tissues"/>
</dbReference>
<dbReference type="GO" id="GO:0005730">
    <property type="term" value="C:nucleolus"/>
    <property type="evidence" value="ECO:0000250"/>
    <property type="project" value="UniProtKB"/>
</dbReference>
<dbReference type="GO" id="GO:0005634">
    <property type="term" value="C:nucleus"/>
    <property type="evidence" value="ECO:0000250"/>
    <property type="project" value="UniProtKB"/>
</dbReference>
<dbReference type="GO" id="GO:0005525">
    <property type="term" value="F:GTP binding"/>
    <property type="evidence" value="ECO:0000250"/>
    <property type="project" value="UniProtKB"/>
</dbReference>
<dbReference type="GO" id="GO:0042127">
    <property type="term" value="P:regulation of cell population proliferation"/>
    <property type="evidence" value="ECO:0000250"/>
    <property type="project" value="UniProtKB"/>
</dbReference>
<dbReference type="CDD" id="cd04178">
    <property type="entry name" value="Nucleostemin_like"/>
    <property type="match status" value="1"/>
</dbReference>
<dbReference type="FunFam" id="1.10.1580.10:FF:000018">
    <property type="entry name" value="Guanine nucleotide-binding protein-like 3"/>
    <property type="match status" value="1"/>
</dbReference>
<dbReference type="FunFam" id="3.40.50.300:FF:000571">
    <property type="entry name" value="Guanine nucleotide-binding protein-like NSN1"/>
    <property type="match status" value="1"/>
</dbReference>
<dbReference type="Gene3D" id="1.10.1580.10">
    <property type="match status" value="1"/>
</dbReference>
<dbReference type="Gene3D" id="3.40.50.300">
    <property type="entry name" value="P-loop containing nucleotide triphosphate hydrolases"/>
    <property type="match status" value="1"/>
</dbReference>
<dbReference type="InterPro" id="IPR030378">
    <property type="entry name" value="G_CP_dom"/>
</dbReference>
<dbReference type="InterPro" id="IPR014813">
    <property type="entry name" value="Gnl3_N_dom"/>
</dbReference>
<dbReference type="InterPro" id="IPR006073">
    <property type="entry name" value="GTP-bd"/>
</dbReference>
<dbReference type="InterPro" id="IPR023179">
    <property type="entry name" value="GTP-bd_ortho_bundle_sf"/>
</dbReference>
<dbReference type="InterPro" id="IPR027417">
    <property type="entry name" value="P-loop_NTPase"/>
</dbReference>
<dbReference type="InterPro" id="IPR050755">
    <property type="entry name" value="TRAFAC_YlqF/YawG_RiboMat"/>
</dbReference>
<dbReference type="PANTHER" id="PTHR11089">
    <property type="entry name" value="GTP-BINDING PROTEIN-RELATED"/>
    <property type="match status" value="1"/>
</dbReference>
<dbReference type="PANTHER" id="PTHR11089:SF11">
    <property type="entry name" value="GUANINE NUCLEOTIDE-BINDING PROTEIN-LIKE 3"/>
    <property type="match status" value="1"/>
</dbReference>
<dbReference type="Pfam" id="PF08701">
    <property type="entry name" value="GN3L_Grn1"/>
    <property type="match status" value="1"/>
</dbReference>
<dbReference type="Pfam" id="PF01926">
    <property type="entry name" value="MMR_HSR1"/>
    <property type="match status" value="1"/>
</dbReference>
<dbReference type="SUPFAM" id="SSF52540">
    <property type="entry name" value="P-loop containing nucleoside triphosphate hydrolases"/>
    <property type="match status" value="1"/>
</dbReference>
<dbReference type="PROSITE" id="PS51721">
    <property type="entry name" value="G_CP"/>
    <property type="match status" value="1"/>
</dbReference>
<gene>
    <name type="primary">gnl3</name>
</gene>
<keyword id="KW-0175">Coiled coil</keyword>
<keyword id="KW-0342">GTP-binding</keyword>
<keyword id="KW-0547">Nucleotide-binding</keyword>
<keyword id="KW-0539">Nucleus</keyword>
<keyword id="KW-1185">Reference proteome</keyword>
<organism>
    <name type="scientific">Xenopus tropicalis</name>
    <name type="common">Western clawed frog</name>
    <name type="synonym">Silurana tropicalis</name>
    <dbReference type="NCBI Taxonomy" id="8364"/>
    <lineage>
        <taxon>Eukaryota</taxon>
        <taxon>Metazoa</taxon>
        <taxon>Chordata</taxon>
        <taxon>Craniata</taxon>
        <taxon>Vertebrata</taxon>
        <taxon>Euteleostomi</taxon>
        <taxon>Amphibia</taxon>
        <taxon>Batrachia</taxon>
        <taxon>Anura</taxon>
        <taxon>Pipoidea</taxon>
        <taxon>Pipidae</taxon>
        <taxon>Xenopodinae</taxon>
        <taxon>Xenopus</taxon>
        <taxon>Silurana</taxon>
    </lineage>
</organism>
<comment type="function">
    <text evidence="1">May play a role in regulating cellular proliferation.</text>
</comment>
<comment type="subcellular location">
    <subcellularLocation>
        <location evidence="2">Nucleus</location>
    </subcellularLocation>
    <subcellularLocation>
        <location evidence="2">Nucleus</location>
        <location evidence="2">Nucleolus</location>
    </subcellularLocation>
    <text evidence="2">Shuttles between the nucleus and nucleolus.</text>
</comment>
<comment type="domain">
    <text>In contrast to other GTP-binding proteins, this family is characterized by a circular permutation of the GTPase motifs described by a G4-G1-G3 pattern.</text>
</comment>
<comment type="similarity">
    <text evidence="4">Belongs to the TRAFAC class YlqF/YawG GTPase family.</text>
</comment>
<comment type="sequence caution" evidence="6">
    <conflict type="erroneous initiation">
        <sequence resource="EMBL-CDS" id="AAH63220"/>
    </conflict>
</comment>
<evidence type="ECO:0000250" key="1"/>
<evidence type="ECO:0000250" key="2">
    <source>
        <dbReference type="UniProtKB" id="Q811S9"/>
    </source>
</evidence>
<evidence type="ECO:0000255" key="3"/>
<evidence type="ECO:0000255" key="4">
    <source>
        <dbReference type="PROSITE-ProRule" id="PRU01058"/>
    </source>
</evidence>
<evidence type="ECO:0000256" key="5">
    <source>
        <dbReference type="SAM" id="MobiDB-lite"/>
    </source>
</evidence>
<evidence type="ECO:0000305" key="6"/>
<protein>
    <recommendedName>
        <fullName>Guanine nucleotide-binding protein-like 3</fullName>
    </recommendedName>
    <alternativeName>
        <fullName>Nucleostemin-like protein</fullName>
    </alternativeName>
</protein>
<proteinExistence type="evidence at transcript level"/>
<reference key="1">
    <citation type="submission" date="2003-12" db="EMBL/GenBank/DDBJ databases">
        <authorList>
            <consortium name="NIH - Xenopus Gene Collection (XGC) project"/>
        </authorList>
    </citation>
    <scope>NUCLEOTIDE SEQUENCE [LARGE SCALE MRNA]</scope>
    <source>
        <tissue>Embryo</tissue>
    </source>
</reference>